<dbReference type="EMBL" id="CP000548">
    <property type="protein sequence ID" value="ABO06740.1"/>
    <property type="molecule type" value="Genomic_DNA"/>
</dbReference>
<dbReference type="RefSeq" id="WP_004192342.1">
    <property type="nucleotide sequence ID" value="NZ_CP007802.1"/>
</dbReference>
<dbReference type="SMR" id="A3MK90"/>
<dbReference type="KEGG" id="bmaz:BM44_1976"/>
<dbReference type="KEGG" id="bmn:BMA10247_1122"/>
<dbReference type="PATRIC" id="fig|320389.8.peg.2219"/>
<dbReference type="GO" id="GO:0043590">
    <property type="term" value="C:bacterial nucleoid"/>
    <property type="evidence" value="ECO:0007669"/>
    <property type="project" value="UniProtKB-UniRule"/>
</dbReference>
<dbReference type="GO" id="GO:0005829">
    <property type="term" value="C:cytosol"/>
    <property type="evidence" value="ECO:0007669"/>
    <property type="project" value="TreeGrafter"/>
</dbReference>
<dbReference type="GO" id="GO:0003677">
    <property type="term" value="F:DNA binding"/>
    <property type="evidence" value="ECO:0007669"/>
    <property type="project" value="UniProtKB-UniRule"/>
</dbReference>
<dbReference type="FunFam" id="3.30.1310.10:FF:000001">
    <property type="entry name" value="Nucleoid-associated protein YbaB"/>
    <property type="match status" value="1"/>
</dbReference>
<dbReference type="Gene3D" id="3.30.1310.10">
    <property type="entry name" value="Nucleoid-associated protein YbaB-like domain"/>
    <property type="match status" value="1"/>
</dbReference>
<dbReference type="HAMAP" id="MF_00274">
    <property type="entry name" value="DNA_YbaB_EbfC"/>
    <property type="match status" value="1"/>
</dbReference>
<dbReference type="InterPro" id="IPR036894">
    <property type="entry name" value="YbaB-like_sf"/>
</dbReference>
<dbReference type="InterPro" id="IPR004401">
    <property type="entry name" value="YbaB/EbfC"/>
</dbReference>
<dbReference type="NCBIfam" id="TIGR00103">
    <property type="entry name" value="DNA_YbaB_EbfC"/>
    <property type="match status" value="1"/>
</dbReference>
<dbReference type="PANTHER" id="PTHR33449">
    <property type="entry name" value="NUCLEOID-ASSOCIATED PROTEIN YBAB"/>
    <property type="match status" value="1"/>
</dbReference>
<dbReference type="PANTHER" id="PTHR33449:SF1">
    <property type="entry name" value="NUCLEOID-ASSOCIATED PROTEIN YBAB"/>
    <property type="match status" value="1"/>
</dbReference>
<dbReference type="Pfam" id="PF02575">
    <property type="entry name" value="YbaB_DNA_bd"/>
    <property type="match status" value="1"/>
</dbReference>
<dbReference type="PIRSF" id="PIRSF004555">
    <property type="entry name" value="UCP004555"/>
    <property type="match status" value="1"/>
</dbReference>
<dbReference type="SUPFAM" id="SSF82607">
    <property type="entry name" value="YbaB-like"/>
    <property type="match status" value="1"/>
</dbReference>
<keyword id="KW-0963">Cytoplasm</keyword>
<keyword id="KW-0238">DNA-binding</keyword>
<feature type="chain" id="PRO_1000003702" description="Nucleoid-associated protein BMA10247_1122">
    <location>
        <begin position="1"/>
        <end position="108"/>
    </location>
</feature>
<feature type="region of interest" description="Disordered" evidence="2">
    <location>
        <begin position="84"/>
        <end position="108"/>
    </location>
</feature>
<feature type="compositionally biased region" description="Polar residues" evidence="2">
    <location>
        <begin position="85"/>
        <end position="95"/>
    </location>
</feature>
<feature type="compositionally biased region" description="Pro residues" evidence="2">
    <location>
        <begin position="99"/>
        <end position="108"/>
    </location>
</feature>
<name>Y3622_BURM7</name>
<organism>
    <name type="scientific">Burkholderia mallei (strain NCTC 10247)</name>
    <dbReference type="NCBI Taxonomy" id="320389"/>
    <lineage>
        <taxon>Bacteria</taxon>
        <taxon>Pseudomonadati</taxon>
        <taxon>Pseudomonadota</taxon>
        <taxon>Betaproteobacteria</taxon>
        <taxon>Burkholderiales</taxon>
        <taxon>Burkholderiaceae</taxon>
        <taxon>Burkholderia</taxon>
        <taxon>pseudomallei group</taxon>
    </lineage>
</organism>
<accession>A3MK90</accession>
<proteinExistence type="inferred from homology"/>
<evidence type="ECO:0000255" key="1">
    <source>
        <dbReference type="HAMAP-Rule" id="MF_00274"/>
    </source>
</evidence>
<evidence type="ECO:0000256" key="2">
    <source>
        <dbReference type="SAM" id="MobiDB-lite"/>
    </source>
</evidence>
<reference key="1">
    <citation type="journal article" date="2010" name="Genome Biol. Evol.">
        <title>Continuing evolution of Burkholderia mallei through genome reduction and large-scale rearrangements.</title>
        <authorList>
            <person name="Losada L."/>
            <person name="Ronning C.M."/>
            <person name="DeShazer D."/>
            <person name="Woods D."/>
            <person name="Fedorova N."/>
            <person name="Kim H.S."/>
            <person name="Shabalina S.A."/>
            <person name="Pearson T.R."/>
            <person name="Brinkac L."/>
            <person name="Tan P."/>
            <person name="Nandi T."/>
            <person name="Crabtree J."/>
            <person name="Badger J."/>
            <person name="Beckstrom-Sternberg S."/>
            <person name="Saqib M."/>
            <person name="Schutzer S.E."/>
            <person name="Keim P."/>
            <person name="Nierman W.C."/>
        </authorList>
    </citation>
    <scope>NUCLEOTIDE SEQUENCE [LARGE SCALE GENOMIC DNA]</scope>
    <source>
        <strain>NCTC 10247</strain>
    </source>
</reference>
<comment type="function">
    <text evidence="1">Binds to DNA and alters its conformation. May be involved in regulation of gene expression, nucleoid organization and DNA protection.</text>
</comment>
<comment type="subunit">
    <text evidence="1">Homodimer.</text>
</comment>
<comment type="subcellular location">
    <subcellularLocation>
        <location evidence="1">Cytoplasm</location>
        <location evidence="1">Nucleoid</location>
    </subcellularLocation>
</comment>
<comment type="similarity">
    <text evidence="1">Belongs to the YbaB/EbfC family.</text>
</comment>
<gene>
    <name type="ordered locus">BMA10247_1122</name>
</gene>
<sequence>MMKGQLAGLMKQAQQMQENMKKMQEQLALIEVEGQSGAGLVKVTMTCRNEVRRVAIDPSLLADDKDMLEDLVAAAFNDAVRKAEATSQEKMSGMTSGLPLPPGFKLPF</sequence>
<protein>
    <recommendedName>
        <fullName evidence="1">Nucleoid-associated protein BMA10247_1122</fullName>
    </recommendedName>
</protein>